<reference key="1">
    <citation type="journal article" date="2001" name="Proc. Natl. Acad. Sci. U.S.A.">
        <title>Complete genome sequence of Caulobacter crescentus.</title>
        <authorList>
            <person name="Nierman W.C."/>
            <person name="Feldblyum T.V."/>
            <person name="Laub M.T."/>
            <person name="Paulsen I.T."/>
            <person name="Nelson K.E."/>
            <person name="Eisen J.A."/>
            <person name="Heidelberg J.F."/>
            <person name="Alley M.R.K."/>
            <person name="Ohta N."/>
            <person name="Maddock J.R."/>
            <person name="Potocka I."/>
            <person name="Nelson W.C."/>
            <person name="Newton A."/>
            <person name="Stephens C."/>
            <person name="Phadke N.D."/>
            <person name="Ely B."/>
            <person name="DeBoy R.T."/>
            <person name="Dodson R.J."/>
            <person name="Durkin A.S."/>
            <person name="Gwinn M.L."/>
            <person name="Haft D.H."/>
            <person name="Kolonay J.F."/>
            <person name="Smit J."/>
            <person name="Craven M.B."/>
            <person name="Khouri H.M."/>
            <person name="Shetty J."/>
            <person name="Berry K.J."/>
            <person name="Utterback T.R."/>
            <person name="Tran K."/>
            <person name="Wolf A.M."/>
            <person name="Vamathevan J.J."/>
            <person name="Ermolaeva M.D."/>
            <person name="White O."/>
            <person name="Salzberg S.L."/>
            <person name="Venter J.C."/>
            <person name="Shapiro L."/>
            <person name="Fraser C.M."/>
        </authorList>
    </citation>
    <scope>NUCLEOTIDE SEQUENCE [LARGE SCALE GENOMIC DNA]</scope>
    <source>
        <strain>ATCC 19089 / CIP 103742 / CB 15</strain>
    </source>
</reference>
<proteinExistence type="inferred from homology"/>
<evidence type="ECO:0000305" key="1"/>
<organism>
    <name type="scientific">Caulobacter vibrioides (strain ATCC 19089 / CIP 103742 / CB 15)</name>
    <name type="common">Caulobacter crescentus</name>
    <dbReference type="NCBI Taxonomy" id="190650"/>
    <lineage>
        <taxon>Bacteria</taxon>
        <taxon>Pseudomonadati</taxon>
        <taxon>Pseudomonadota</taxon>
        <taxon>Alphaproteobacteria</taxon>
        <taxon>Caulobacterales</taxon>
        <taxon>Caulobacteraceae</taxon>
        <taxon>Caulobacter</taxon>
    </lineage>
</organism>
<dbReference type="EMBL" id="AE005673">
    <property type="protein sequence ID" value="AAK25140.1"/>
    <property type="molecule type" value="Genomic_DNA"/>
</dbReference>
<dbReference type="PIR" id="H87642">
    <property type="entry name" value="H87642"/>
</dbReference>
<dbReference type="RefSeq" id="NP_421972.1">
    <property type="nucleotide sequence ID" value="NC_002696.2"/>
</dbReference>
<dbReference type="RefSeq" id="WP_010921014.1">
    <property type="nucleotide sequence ID" value="NC_002696.2"/>
</dbReference>
<dbReference type="SMR" id="P58114"/>
<dbReference type="STRING" id="190650.CC_3178"/>
<dbReference type="EnsemblBacteria" id="AAK25140">
    <property type="protein sequence ID" value="AAK25140"/>
    <property type="gene ID" value="CC_3178"/>
</dbReference>
<dbReference type="KEGG" id="ccr:CC_3178"/>
<dbReference type="PATRIC" id="fig|190650.5.peg.3185"/>
<dbReference type="eggNOG" id="COG1741">
    <property type="taxonomic scope" value="Bacteria"/>
</dbReference>
<dbReference type="HOGENOM" id="CLU_045717_1_1_5"/>
<dbReference type="BioCyc" id="CAULO:CC3178-MONOMER"/>
<dbReference type="Proteomes" id="UP000001816">
    <property type="component" value="Chromosome"/>
</dbReference>
<dbReference type="CDD" id="cd02247">
    <property type="entry name" value="cupin_pirin_C"/>
    <property type="match status" value="1"/>
</dbReference>
<dbReference type="CDD" id="cd02909">
    <property type="entry name" value="cupin_pirin_N"/>
    <property type="match status" value="1"/>
</dbReference>
<dbReference type="Gene3D" id="2.60.120.10">
    <property type="entry name" value="Jelly Rolls"/>
    <property type="match status" value="2"/>
</dbReference>
<dbReference type="InterPro" id="IPR012093">
    <property type="entry name" value="Pirin"/>
</dbReference>
<dbReference type="InterPro" id="IPR008778">
    <property type="entry name" value="Pirin_C_dom"/>
</dbReference>
<dbReference type="InterPro" id="IPR003829">
    <property type="entry name" value="Pirin_N_dom"/>
</dbReference>
<dbReference type="InterPro" id="IPR014710">
    <property type="entry name" value="RmlC-like_jellyroll"/>
</dbReference>
<dbReference type="InterPro" id="IPR011051">
    <property type="entry name" value="RmlC_Cupin_sf"/>
</dbReference>
<dbReference type="PANTHER" id="PTHR13903:SF8">
    <property type="entry name" value="PIRIN"/>
    <property type="match status" value="1"/>
</dbReference>
<dbReference type="PANTHER" id="PTHR13903">
    <property type="entry name" value="PIRIN-RELATED"/>
    <property type="match status" value="1"/>
</dbReference>
<dbReference type="Pfam" id="PF02678">
    <property type="entry name" value="Pirin"/>
    <property type="match status" value="1"/>
</dbReference>
<dbReference type="Pfam" id="PF05726">
    <property type="entry name" value="Pirin_C"/>
    <property type="match status" value="1"/>
</dbReference>
<dbReference type="PIRSF" id="PIRSF006232">
    <property type="entry name" value="Pirin"/>
    <property type="match status" value="1"/>
</dbReference>
<dbReference type="SUPFAM" id="SSF51182">
    <property type="entry name" value="RmlC-like cupins"/>
    <property type="match status" value="1"/>
</dbReference>
<protein>
    <recommendedName>
        <fullName>Pirin-like protein CC_3178</fullName>
    </recommendedName>
</protein>
<accession>P58114</accession>
<gene>
    <name type="ordered locus">CC_3178</name>
</gene>
<keyword id="KW-1185">Reference proteome</keyword>
<comment type="similarity">
    <text evidence="1">Belongs to the pirin family.</text>
</comment>
<name>Y3178_CAUVC</name>
<feature type="chain" id="PRO_0000214060" description="Pirin-like protein CC_3178">
    <location>
        <begin position="1"/>
        <end position="288"/>
    </location>
</feature>
<sequence length="288" mass="31902">MIDLVFDARRKDLGNFEVGRVLPFHAHRMVGPFTFLDHMGPAAFQPGFPKSADVRPHPHIGLSTLTYLFEGEITHRDSVGSLAVIKPHEVNWMTAGSGITHSERFEGLREHGGRMDGMQAWVALPTEFEEIDPSFTHHEGPAELPYYENGGLKARLIAGEAFGAKSSVPVYSPLFYVHWELEPGVTAALPAEYPERAAYIAAGRVEVDGRELVEAQMAVFAPGETVVFKALERSTVMLLGGEPVGPRFIEWNFVSSSKDRIEQAKADWKAGRMKLPDLDHGEFIPLPE</sequence>